<gene>
    <name evidence="1" type="primary">mraY</name>
    <name type="ordered locus">cauri_1670</name>
</gene>
<proteinExistence type="inferred from homology"/>
<feature type="chain" id="PRO_1000117175" description="Phospho-N-acetylmuramoyl-pentapeptide-transferase">
    <location>
        <begin position="1"/>
        <end position="370"/>
    </location>
</feature>
<feature type="transmembrane region" description="Helical" evidence="1">
    <location>
        <begin position="3"/>
        <end position="23"/>
    </location>
</feature>
<feature type="transmembrane region" description="Helical" evidence="1">
    <location>
        <begin position="54"/>
        <end position="74"/>
    </location>
</feature>
<feature type="transmembrane region" description="Helical" evidence="1">
    <location>
        <begin position="79"/>
        <end position="99"/>
    </location>
</feature>
<feature type="transmembrane region" description="Helical" evidence="1">
    <location>
        <begin position="118"/>
        <end position="138"/>
    </location>
</feature>
<feature type="transmembrane region" description="Helical" evidence="1">
    <location>
        <begin position="161"/>
        <end position="181"/>
    </location>
</feature>
<feature type="transmembrane region" description="Helical" evidence="1">
    <location>
        <begin position="197"/>
        <end position="217"/>
    </location>
</feature>
<feature type="transmembrane region" description="Helical" evidence="1">
    <location>
        <begin position="238"/>
        <end position="258"/>
    </location>
</feature>
<feature type="transmembrane region" description="Helical" evidence="1">
    <location>
        <begin position="262"/>
        <end position="282"/>
    </location>
</feature>
<feature type="transmembrane region" description="Helical" evidence="1">
    <location>
        <begin position="290"/>
        <end position="310"/>
    </location>
</feature>
<feature type="transmembrane region" description="Helical" evidence="1">
    <location>
        <begin position="341"/>
        <end position="361"/>
    </location>
</feature>
<evidence type="ECO:0000255" key="1">
    <source>
        <dbReference type="HAMAP-Rule" id="MF_00038"/>
    </source>
</evidence>
<comment type="function">
    <text evidence="1">Catalyzes the initial step of the lipid cycle reactions in the biosynthesis of the cell wall peptidoglycan: transfers peptidoglycan precursor phospho-MurNAc-pentapeptide from UDP-MurNAc-pentapeptide onto the lipid carrier undecaprenyl phosphate, yielding undecaprenyl-pyrophosphoryl-MurNAc-pentapeptide, known as lipid I.</text>
</comment>
<comment type="catalytic activity">
    <reaction evidence="1">
        <text>UDP-N-acetyl-alpha-D-muramoyl-L-alanyl-gamma-D-glutamyl-meso-2,6-diaminopimeloyl-D-alanyl-D-alanine + di-trans,octa-cis-undecaprenyl phosphate = di-trans,octa-cis-undecaprenyl diphospho-N-acetyl-alpha-D-muramoyl-L-alanyl-D-glutamyl-meso-2,6-diaminopimeloyl-D-alanyl-D-alanine + UMP</text>
        <dbReference type="Rhea" id="RHEA:28386"/>
        <dbReference type="ChEBI" id="CHEBI:57865"/>
        <dbReference type="ChEBI" id="CHEBI:60392"/>
        <dbReference type="ChEBI" id="CHEBI:61386"/>
        <dbReference type="ChEBI" id="CHEBI:61387"/>
        <dbReference type="EC" id="2.7.8.13"/>
    </reaction>
</comment>
<comment type="cofactor">
    <cofactor evidence="1">
        <name>Mg(2+)</name>
        <dbReference type="ChEBI" id="CHEBI:18420"/>
    </cofactor>
</comment>
<comment type="pathway">
    <text evidence="1">Cell wall biogenesis; peptidoglycan biosynthesis.</text>
</comment>
<comment type="subcellular location">
    <subcellularLocation>
        <location evidence="1">Cell membrane</location>
        <topology evidence="1">Multi-pass membrane protein</topology>
    </subcellularLocation>
</comment>
<comment type="similarity">
    <text evidence="1">Belongs to the glycosyltransferase 4 family. MraY subfamily.</text>
</comment>
<reference key="1">
    <citation type="journal article" date="2010" name="BMC Genomics">
        <title>Complete genome sequence and lifestyle of black-pigmented Corynebacterium aurimucosum ATCC 700975 (formerly C. nigricans CN-1) isolated from a vaginal swab of a woman with spontaneous abortion.</title>
        <authorList>
            <person name="Trost E."/>
            <person name="Gotker S."/>
            <person name="Schneider J."/>
            <person name="Schneiker-Bekel S."/>
            <person name="Szczepanowski R."/>
            <person name="Tilker A."/>
            <person name="Viehoever P."/>
            <person name="Arnold W."/>
            <person name="Bekel T."/>
            <person name="Blom J."/>
            <person name="Gartemann K.H."/>
            <person name="Linke B."/>
            <person name="Goesmann A."/>
            <person name="Puhler A."/>
            <person name="Shukla S.K."/>
            <person name="Tauch A."/>
        </authorList>
    </citation>
    <scope>NUCLEOTIDE SEQUENCE [LARGE SCALE GENOMIC DNA]</scope>
    <source>
        <strain>ATCC 700975 / DSM 44827 / CIP 107346 / CN-1</strain>
    </source>
</reference>
<organism>
    <name type="scientific">Corynebacterium aurimucosum (strain ATCC 700975 / DSM 44827 / CIP 107346 / CN-1)</name>
    <name type="common">Corynebacterium nigricans</name>
    <dbReference type="NCBI Taxonomy" id="548476"/>
    <lineage>
        <taxon>Bacteria</taxon>
        <taxon>Bacillati</taxon>
        <taxon>Actinomycetota</taxon>
        <taxon>Actinomycetes</taxon>
        <taxon>Mycobacteriales</taxon>
        <taxon>Corynebacteriaceae</taxon>
        <taxon>Corynebacterium</taxon>
    </lineage>
</organism>
<sequence length="370" mass="39221">MTQIIIAGAVSFLVAIFTTPVLIRYFSDTGRGQEIREDGPKSHLRKRGTPTMGGLAILAGILVAYVVAGLYGLLTGHEAFTASGLLVLGLTLGLGAVGFADDFIKLFRHRNLGLNKTAKLISQLVLALLFGFLVLRFPNDAGLTPGSTKLSFIRDLKTFDLAVGGTVIGTIVFLIFMYILIAAWSNAVNLTDGLDGLAAGVTAIVMGSYSLMTFWQFRYSCATNFAAGCYQVRDPLDLAVLAAAGLGGCLGFLWWNAAPAKIFMGDTGSLALGGLVAGISVTSRTELLMIIIGALFVIETVSVVIQIVVFHSTGKRFFRMAPIHHHFENGGWAETAVVVRFWLLAAMAAMAGVAIFYGDWLTASGIGVGA</sequence>
<accession>C3PHF9</accession>
<keyword id="KW-0131">Cell cycle</keyword>
<keyword id="KW-0132">Cell division</keyword>
<keyword id="KW-1003">Cell membrane</keyword>
<keyword id="KW-0133">Cell shape</keyword>
<keyword id="KW-0961">Cell wall biogenesis/degradation</keyword>
<keyword id="KW-0460">Magnesium</keyword>
<keyword id="KW-0472">Membrane</keyword>
<keyword id="KW-0479">Metal-binding</keyword>
<keyword id="KW-0573">Peptidoglycan synthesis</keyword>
<keyword id="KW-1185">Reference proteome</keyword>
<keyword id="KW-0808">Transferase</keyword>
<keyword id="KW-0812">Transmembrane</keyword>
<keyword id="KW-1133">Transmembrane helix</keyword>
<protein>
    <recommendedName>
        <fullName evidence="1">Phospho-N-acetylmuramoyl-pentapeptide-transferase</fullName>
        <ecNumber evidence="1">2.7.8.13</ecNumber>
    </recommendedName>
    <alternativeName>
        <fullName evidence="1">UDP-MurNAc-pentapeptide phosphotransferase</fullName>
    </alternativeName>
</protein>
<name>MRAY_CORA7</name>
<dbReference type="EC" id="2.7.8.13" evidence="1"/>
<dbReference type="EMBL" id="CP001601">
    <property type="protein sequence ID" value="ACP33263.1"/>
    <property type="molecule type" value="Genomic_DNA"/>
</dbReference>
<dbReference type="RefSeq" id="WP_010190532.1">
    <property type="nucleotide sequence ID" value="NZ_ACLH01000088.1"/>
</dbReference>
<dbReference type="SMR" id="C3PHF9"/>
<dbReference type="STRING" id="548476.cauri_1670"/>
<dbReference type="GeneID" id="31924299"/>
<dbReference type="KEGG" id="car:cauri_1670"/>
<dbReference type="eggNOG" id="COG0472">
    <property type="taxonomic scope" value="Bacteria"/>
</dbReference>
<dbReference type="HOGENOM" id="CLU_023982_0_1_11"/>
<dbReference type="OrthoDB" id="9805475at2"/>
<dbReference type="UniPathway" id="UPA00219"/>
<dbReference type="Proteomes" id="UP000002077">
    <property type="component" value="Chromosome"/>
</dbReference>
<dbReference type="GO" id="GO:0005886">
    <property type="term" value="C:plasma membrane"/>
    <property type="evidence" value="ECO:0007669"/>
    <property type="project" value="UniProtKB-SubCell"/>
</dbReference>
<dbReference type="GO" id="GO:0046872">
    <property type="term" value="F:metal ion binding"/>
    <property type="evidence" value="ECO:0007669"/>
    <property type="project" value="UniProtKB-KW"/>
</dbReference>
<dbReference type="GO" id="GO:0008963">
    <property type="term" value="F:phospho-N-acetylmuramoyl-pentapeptide-transferase activity"/>
    <property type="evidence" value="ECO:0007669"/>
    <property type="project" value="UniProtKB-UniRule"/>
</dbReference>
<dbReference type="GO" id="GO:0051992">
    <property type="term" value="F:UDP-N-acetylmuramoyl-L-alanyl-D-glutamyl-meso-2,6-diaminopimelyl-D-alanyl-D-alanine:undecaprenyl-phosphate transferase activity"/>
    <property type="evidence" value="ECO:0007669"/>
    <property type="project" value="RHEA"/>
</dbReference>
<dbReference type="GO" id="GO:0051301">
    <property type="term" value="P:cell division"/>
    <property type="evidence" value="ECO:0007669"/>
    <property type="project" value="UniProtKB-KW"/>
</dbReference>
<dbReference type="GO" id="GO:0071555">
    <property type="term" value="P:cell wall organization"/>
    <property type="evidence" value="ECO:0007669"/>
    <property type="project" value="UniProtKB-KW"/>
</dbReference>
<dbReference type="GO" id="GO:0009252">
    <property type="term" value="P:peptidoglycan biosynthetic process"/>
    <property type="evidence" value="ECO:0007669"/>
    <property type="project" value="UniProtKB-UniRule"/>
</dbReference>
<dbReference type="GO" id="GO:0008360">
    <property type="term" value="P:regulation of cell shape"/>
    <property type="evidence" value="ECO:0007669"/>
    <property type="project" value="UniProtKB-KW"/>
</dbReference>
<dbReference type="CDD" id="cd06852">
    <property type="entry name" value="GT_MraY"/>
    <property type="match status" value="1"/>
</dbReference>
<dbReference type="HAMAP" id="MF_00038">
    <property type="entry name" value="MraY"/>
    <property type="match status" value="1"/>
</dbReference>
<dbReference type="InterPro" id="IPR000715">
    <property type="entry name" value="Glycosyl_transferase_4"/>
</dbReference>
<dbReference type="InterPro" id="IPR003524">
    <property type="entry name" value="PNAcMuramoyl-5peptid_Trfase"/>
</dbReference>
<dbReference type="InterPro" id="IPR018480">
    <property type="entry name" value="PNAcMuramoyl-5peptid_Trfase_CS"/>
</dbReference>
<dbReference type="NCBIfam" id="TIGR00445">
    <property type="entry name" value="mraY"/>
    <property type="match status" value="1"/>
</dbReference>
<dbReference type="PANTHER" id="PTHR22926">
    <property type="entry name" value="PHOSPHO-N-ACETYLMURAMOYL-PENTAPEPTIDE-TRANSFERASE"/>
    <property type="match status" value="1"/>
</dbReference>
<dbReference type="PANTHER" id="PTHR22926:SF5">
    <property type="entry name" value="PHOSPHO-N-ACETYLMURAMOYL-PENTAPEPTIDE-TRANSFERASE HOMOLOG"/>
    <property type="match status" value="1"/>
</dbReference>
<dbReference type="Pfam" id="PF00953">
    <property type="entry name" value="Glycos_transf_4"/>
    <property type="match status" value="1"/>
</dbReference>
<dbReference type="Pfam" id="PF10555">
    <property type="entry name" value="MraY_sig1"/>
    <property type="match status" value="1"/>
</dbReference>
<dbReference type="PROSITE" id="PS01347">
    <property type="entry name" value="MRAY_1"/>
    <property type="match status" value="1"/>
</dbReference>
<dbReference type="PROSITE" id="PS01348">
    <property type="entry name" value="MRAY_2"/>
    <property type="match status" value="1"/>
</dbReference>